<proteinExistence type="inferred from homology"/>
<keyword id="KW-0963">Cytoplasm</keyword>
<keyword id="KW-1185">Reference proteome</keyword>
<keyword id="KW-0804">Transcription</keyword>
<keyword id="KW-0805">Transcription regulation</keyword>
<reference key="1">
    <citation type="journal article" date="2001" name="Nature">
        <title>Genome sequence of Yersinia pestis, the causative agent of plague.</title>
        <authorList>
            <person name="Parkhill J."/>
            <person name="Wren B.W."/>
            <person name="Thomson N.R."/>
            <person name="Titball R.W."/>
            <person name="Holden M.T.G."/>
            <person name="Prentice M.B."/>
            <person name="Sebaihia M."/>
            <person name="James K.D."/>
            <person name="Churcher C.M."/>
            <person name="Mungall K.L."/>
            <person name="Baker S."/>
            <person name="Basham D."/>
            <person name="Bentley S.D."/>
            <person name="Brooks K."/>
            <person name="Cerdeno-Tarraga A.-M."/>
            <person name="Chillingworth T."/>
            <person name="Cronin A."/>
            <person name="Davies R.M."/>
            <person name="Davis P."/>
            <person name="Dougan G."/>
            <person name="Feltwell T."/>
            <person name="Hamlin N."/>
            <person name="Holroyd S."/>
            <person name="Jagels K."/>
            <person name="Karlyshev A.V."/>
            <person name="Leather S."/>
            <person name="Moule S."/>
            <person name="Oyston P.C.F."/>
            <person name="Quail M.A."/>
            <person name="Rutherford K.M."/>
            <person name="Simmonds M."/>
            <person name="Skelton J."/>
            <person name="Stevens K."/>
            <person name="Whitehead S."/>
            <person name="Barrell B.G."/>
        </authorList>
    </citation>
    <scope>NUCLEOTIDE SEQUENCE [LARGE SCALE GENOMIC DNA]</scope>
    <source>
        <strain>CO-92 / Biovar Orientalis</strain>
    </source>
</reference>
<reference key="2">
    <citation type="journal article" date="2002" name="J. Bacteriol.">
        <title>Genome sequence of Yersinia pestis KIM.</title>
        <authorList>
            <person name="Deng W."/>
            <person name="Burland V."/>
            <person name="Plunkett G. III"/>
            <person name="Boutin A."/>
            <person name="Mayhew G.F."/>
            <person name="Liss P."/>
            <person name="Perna N.T."/>
            <person name="Rose D.J."/>
            <person name="Mau B."/>
            <person name="Zhou S."/>
            <person name="Schwartz D.C."/>
            <person name="Fetherston J.D."/>
            <person name="Lindler L.E."/>
            <person name="Brubaker R.R."/>
            <person name="Plano G.V."/>
            <person name="Straley S.C."/>
            <person name="McDonough K.A."/>
            <person name="Nilles M.L."/>
            <person name="Matson J.S."/>
            <person name="Blattner F.R."/>
            <person name="Perry R.D."/>
        </authorList>
    </citation>
    <scope>NUCLEOTIDE SEQUENCE [LARGE SCALE GENOMIC DNA]</scope>
    <source>
        <strain>KIM10+ / Biovar Mediaevalis</strain>
    </source>
</reference>
<reference key="3">
    <citation type="journal article" date="2004" name="DNA Res.">
        <title>Complete genome sequence of Yersinia pestis strain 91001, an isolate avirulent to humans.</title>
        <authorList>
            <person name="Song Y."/>
            <person name="Tong Z."/>
            <person name="Wang J."/>
            <person name="Wang L."/>
            <person name="Guo Z."/>
            <person name="Han Y."/>
            <person name="Zhang J."/>
            <person name="Pei D."/>
            <person name="Zhou D."/>
            <person name="Qin H."/>
            <person name="Pang X."/>
            <person name="Han Y."/>
            <person name="Zhai J."/>
            <person name="Li M."/>
            <person name="Cui B."/>
            <person name="Qi Z."/>
            <person name="Jin L."/>
            <person name="Dai R."/>
            <person name="Chen F."/>
            <person name="Li S."/>
            <person name="Ye C."/>
            <person name="Du Z."/>
            <person name="Lin W."/>
            <person name="Wang J."/>
            <person name="Yu J."/>
            <person name="Yang H."/>
            <person name="Wang J."/>
            <person name="Huang P."/>
            <person name="Yang R."/>
        </authorList>
    </citation>
    <scope>NUCLEOTIDE SEQUENCE [LARGE SCALE GENOMIC DNA]</scope>
    <source>
        <strain>91001 / Biovar Mediaevalis</strain>
    </source>
</reference>
<dbReference type="EMBL" id="AE009952">
    <property type="protein sequence ID" value="AAM84081.1"/>
    <property type="molecule type" value="Genomic_DNA"/>
</dbReference>
<dbReference type="EMBL" id="AL590842">
    <property type="protein sequence ID" value="CAL22324.1"/>
    <property type="molecule type" value="Genomic_DNA"/>
</dbReference>
<dbReference type="EMBL" id="AE017042">
    <property type="protein sequence ID" value="AAS63270.1"/>
    <property type="status" value="ALT_INIT"/>
    <property type="molecule type" value="Genomic_DNA"/>
</dbReference>
<dbReference type="PIR" id="AI0454">
    <property type="entry name" value="AI0454"/>
</dbReference>
<dbReference type="RefSeq" id="WP_002210683.1">
    <property type="nucleotide sequence ID" value="NZ_WUCM01000097.1"/>
</dbReference>
<dbReference type="RefSeq" id="YP_002348617.1">
    <property type="nucleotide sequence ID" value="NC_003143.1"/>
</dbReference>
<dbReference type="SMR" id="Q7CKT7"/>
<dbReference type="STRING" id="214092.YPO3737"/>
<dbReference type="PaxDb" id="214092-YPO3737"/>
<dbReference type="DNASU" id="1145439"/>
<dbReference type="EnsemblBacteria" id="AAS63270">
    <property type="protein sequence ID" value="AAS63270"/>
    <property type="gene ID" value="YP_3100"/>
</dbReference>
<dbReference type="GeneID" id="57974980"/>
<dbReference type="KEGG" id="ype:YPO3737"/>
<dbReference type="KEGG" id="ypk:y0492"/>
<dbReference type="KEGG" id="ypm:YP_3100"/>
<dbReference type="PATRIC" id="fig|214092.21.peg.4255"/>
<dbReference type="eggNOG" id="COG3160">
    <property type="taxonomic scope" value="Bacteria"/>
</dbReference>
<dbReference type="HOGENOM" id="CLU_142729_0_0_6"/>
<dbReference type="OMA" id="DVIDHWL"/>
<dbReference type="OrthoDB" id="5567237at2"/>
<dbReference type="Proteomes" id="UP000000815">
    <property type="component" value="Chromosome"/>
</dbReference>
<dbReference type="Proteomes" id="UP000001019">
    <property type="component" value="Chromosome"/>
</dbReference>
<dbReference type="Proteomes" id="UP000002490">
    <property type="component" value="Chromosome"/>
</dbReference>
<dbReference type="GO" id="GO:0005737">
    <property type="term" value="C:cytoplasm"/>
    <property type="evidence" value="ECO:0007669"/>
    <property type="project" value="UniProtKB-SubCell"/>
</dbReference>
<dbReference type="GO" id="GO:0006355">
    <property type="term" value="P:regulation of DNA-templated transcription"/>
    <property type="evidence" value="ECO:0007669"/>
    <property type="project" value="InterPro"/>
</dbReference>
<dbReference type="Gene3D" id="1.20.120.1370">
    <property type="entry name" value="Regulator of RNA polymerase sigma(70) subunit, domain 4"/>
    <property type="match status" value="1"/>
</dbReference>
<dbReference type="HAMAP" id="MF_01181">
    <property type="entry name" value="Rsd"/>
    <property type="match status" value="1"/>
</dbReference>
<dbReference type="InterPro" id="IPR038309">
    <property type="entry name" value="Rsd/AlgQ_sf"/>
</dbReference>
<dbReference type="InterPro" id="IPR023785">
    <property type="entry name" value="Sigma70_reg_Rsd"/>
</dbReference>
<dbReference type="InterPro" id="IPR007448">
    <property type="entry name" value="Sigma70_reg_Rsd_AlgQ"/>
</dbReference>
<dbReference type="NCBIfam" id="NF008723">
    <property type="entry name" value="PRK11718.1"/>
    <property type="match status" value="1"/>
</dbReference>
<dbReference type="Pfam" id="PF04353">
    <property type="entry name" value="Rsd_AlgQ"/>
    <property type="match status" value="1"/>
</dbReference>
<dbReference type="PIRSF" id="PIRSF016548">
    <property type="entry name" value="Rsd_AlgQ"/>
    <property type="match status" value="1"/>
</dbReference>
<evidence type="ECO:0000255" key="1">
    <source>
        <dbReference type="HAMAP-Rule" id="MF_01181"/>
    </source>
</evidence>
<evidence type="ECO:0000305" key="2"/>
<protein>
    <recommendedName>
        <fullName evidence="1">Regulator of sigma D</fullName>
    </recommendedName>
</protein>
<gene>
    <name evidence="1" type="primary">rsd</name>
    <name type="ordered locus">YPO3737</name>
    <name type="ordered locus">y0492</name>
    <name type="ordered locus">YP_3100</name>
</gene>
<accession>Q7CKT7</accession>
<accession>Q74RE5</accession>
<organism>
    <name type="scientific">Yersinia pestis</name>
    <dbReference type="NCBI Taxonomy" id="632"/>
    <lineage>
        <taxon>Bacteria</taxon>
        <taxon>Pseudomonadati</taxon>
        <taxon>Pseudomonadota</taxon>
        <taxon>Gammaproteobacteria</taxon>
        <taxon>Enterobacterales</taxon>
        <taxon>Yersiniaceae</taxon>
        <taxon>Yersinia</taxon>
    </lineage>
</organism>
<sequence length="169" mass="19187">MLNRLESLTQRVGGSNELIDQWLHARKELLVSYCTVIGIKPQKEKHTPLNAKTLENFCHNLVDYLSSGHFHLYDRIIKEVEGASSPKMALTAKIHPALKNNTQTIMAFHDCYTNIEIDDDSCTEYQQALSDIGEALDARFRLEDQLIQWAAESWQAAQLADADKKSQVN</sequence>
<name>RSD_YERPE</name>
<comment type="function">
    <text evidence="1">Binds RpoD and negatively regulates RpoD-mediated transcription activation by preventing the interaction between the primary sigma factor RpoD with the catalytic core of the RNA polymerase and with promoter DNA. May be involved in replacement of the RNA polymerase sigma subunit from RpoD to RpoS during the transition from exponential growth to the stationary phase.</text>
</comment>
<comment type="subunit">
    <text evidence="1">Interacts with RpoD.</text>
</comment>
<comment type="subcellular location">
    <subcellularLocation>
        <location evidence="1">Cytoplasm</location>
    </subcellularLocation>
</comment>
<comment type="similarity">
    <text evidence="1">Belongs to the Rsd/AlgQ family.</text>
</comment>
<comment type="sequence caution" evidence="2">
    <conflict type="erroneous initiation">
        <sequence resource="EMBL-CDS" id="AAS63270"/>
    </conflict>
</comment>
<feature type="chain" id="PRO_0000268891" description="Regulator of sigma D">
    <location>
        <begin position="1"/>
        <end position="169"/>
    </location>
</feature>